<accession>O49995</accession>
<protein>
    <recommendedName>
        <fullName>14-3-3-like protein B</fullName>
    </recommendedName>
</protein>
<comment type="similarity">
    <text evidence="1">Belongs to the 14-3-3 family.</text>
</comment>
<keyword id="KW-1185">Reference proteome</keyword>
<sequence length="255" mass="28827">MAREENVYMAKLAEQAERYEEMVSFMEKVSTSLGTSEELTVEERNLLSVAYKNVIGARRASWRIISSIEQKEESRGNEDHVKCIQEYRSKIESELSNICDGILKLLDSCLIPSASAGDSKVFYLKMKGDYHRYLAEFKTGAERKEAAESTLSAYKAAQDIANAELAPTHPIRLGLALNFSVFYYEILNSPDRACNLAKQAFDEAIAELDTLGEESYKDSTLIMQLLRDNLTLWTSDMQDDGADEIKETKTDNEQQ</sequence>
<reference key="1">
    <citation type="journal article" date="1998" name="Planta">
        <title>Five new 14-3-3 isoforms from Nicotiana tabacum L.: implications for the phylogeny of plant 14-3-3 proteins.</title>
        <authorList>
            <person name="Piotrowski M."/>
            <person name="Oecking C."/>
        </authorList>
    </citation>
    <scope>NUCLEOTIDE SEQUENCE [MRNA]</scope>
</reference>
<dbReference type="EMBL" id="U91723">
    <property type="protein sequence ID" value="AAC49891.1"/>
    <property type="molecule type" value="mRNA"/>
</dbReference>
<dbReference type="PIR" id="T04127">
    <property type="entry name" value="T04127"/>
</dbReference>
<dbReference type="RefSeq" id="NP_001312376.1">
    <property type="nucleotide sequence ID" value="NM_001325447.1"/>
</dbReference>
<dbReference type="SMR" id="O49995"/>
<dbReference type="STRING" id="4097.O49995"/>
<dbReference type="PaxDb" id="4097-O49995"/>
<dbReference type="GeneID" id="107787833"/>
<dbReference type="KEGG" id="nta:107787833"/>
<dbReference type="OMA" id="KGCQLAR"/>
<dbReference type="OrthoDB" id="10260625at2759"/>
<dbReference type="PhylomeDB" id="O49995"/>
<dbReference type="Proteomes" id="UP000084051">
    <property type="component" value="Unplaced"/>
</dbReference>
<dbReference type="GO" id="GO:0005737">
    <property type="term" value="C:cytoplasm"/>
    <property type="evidence" value="ECO:0000318"/>
    <property type="project" value="GO_Central"/>
</dbReference>
<dbReference type="GO" id="GO:0008104">
    <property type="term" value="P:protein localization"/>
    <property type="evidence" value="ECO:0000318"/>
    <property type="project" value="GO_Central"/>
</dbReference>
<dbReference type="GO" id="GO:0007165">
    <property type="term" value="P:signal transduction"/>
    <property type="evidence" value="ECO:0000318"/>
    <property type="project" value="GO_Central"/>
</dbReference>
<dbReference type="FunFam" id="1.20.190.20:FF:000002">
    <property type="entry name" value="14-3-3 protein epsilon"/>
    <property type="match status" value="1"/>
</dbReference>
<dbReference type="Gene3D" id="1.20.190.20">
    <property type="entry name" value="14-3-3 domain"/>
    <property type="match status" value="1"/>
</dbReference>
<dbReference type="InterPro" id="IPR000308">
    <property type="entry name" value="14-3-3"/>
</dbReference>
<dbReference type="InterPro" id="IPR023409">
    <property type="entry name" value="14-3-3_CS"/>
</dbReference>
<dbReference type="InterPro" id="IPR036815">
    <property type="entry name" value="14-3-3_dom_sf"/>
</dbReference>
<dbReference type="InterPro" id="IPR023410">
    <property type="entry name" value="14-3-3_domain"/>
</dbReference>
<dbReference type="PANTHER" id="PTHR18860">
    <property type="entry name" value="14-3-3 PROTEIN"/>
    <property type="match status" value="1"/>
</dbReference>
<dbReference type="Pfam" id="PF00244">
    <property type="entry name" value="14-3-3"/>
    <property type="match status" value="1"/>
</dbReference>
<dbReference type="PIRSF" id="PIRSF000868">
    <property type="entry name" value="14-3-3"/>
    <property type="match status" value="1"/>
</dbReference>
<dbReference type="PRINTS" id="PR00305">
    <property type="entry name" value="1433ZETA"/>
</dbReference>
<dbReference type="SMART" id="SM00101">
    <property type="entry name" value="14_3_3"/>
    <property type="match status" value="1"/>
</dbReference>
<dbReference type="SUPFAM" id="SSF48445">
    <property type="entry name" value="14-3-3 protein"/>
    <property type="match status" value="1"/>
</dbReference>
<dbReference type="PROSITE" id="PS00796">
    <property type="entry name" value="1433_1"/>
    <property type="match status" value="1"/>
</dbReference>
<dbReference type="PROSITE" id="PS00797">
    <property type="entry name" value="1433_2"/>
    <property type="match status" value="1"/>
</dbReference>
<proteinExistence type="evidence at transcript level"/>
<feature type="chain" id="PRO_0000058708" description="14-3-3-like protein B">
    <location>
        <begin position="1"/>
        <end position="255"/>
    </location>
</feature>
<evidence type="ECO:0000305" key="1"/>
<organism>
    <name type="scientific">Nicotiana tabacum</name>
    <name type="common">Common tobacco</name>
    <dbReference type="NCBI Taxonomy" id="4097"/>
    <lineage>
        <taxon>Eukaryota</taxon>
        <taxon>Viridiplantae</taxon>
        <taxon>Streptophyta</taxon>
        <taxon>Embryophyta</taxon>
        <taxon>Tracheophyta</taxon>
        <taxon>Spermatophyta</taxon>
        <taxon>Magnoliopsida</taxon>
        <taxon>eudicotyledons</taxon>
        <taxon>Gunneridae</taxon>
        <taxon>Pentapetalae</taxon>
        <taxon>asterids</taxon>
        <taxon>lamiids</taxon>
        <taxon>Solanales</taxon>
        <taxon>Solanaceae</taxon>
        <taxon>Nicotianoideae</taxon>
        <taxon>Nicotianeae</taxon>
        <taxon>Nicotiana</taxon>
    </lineage>
</organism>
<name>1433B_TOBAC</name>